<accession>B3PS53</accession>
<keyword id="KW-0963">Cytoplasm</keyword>
<keyword id="KW-0342">GTP-binding</keyword>
<keyword id="KW-0378">Hydrolase</keyword>
<keyword id="KW-0460">Magnesium</keyword>
<keyword id="KW-0479">Metal-binding</keyword>
<keyword id="KW-0547">Nucleotide-binding</keyword>
<keyword id="KW-0630">Potassium</keyword>
<keyword id="KW-0819">tRNA processing</keyword>
<comment type="function">
    <text evidence="1">Exhibits a very high intrinsic GTPase hydrolysis rate. Involved in the addition of a carboxymethylaminomethyl (cmnm) group at the wobble position (U34) of certain tRNAs, forming tRNA-cmnm(5)s(2)U34.</text>
</comment>
<comment type="cofactor">
    <cofactor evidence="1">
        <name>K(+)</name>
        <dbReference type="ChEBI" id="CHEBI:29103"/>
    </cofactor>
    <text evidence="1">Binds 1 potassium ion per subunit.</text>
</comment>
<comment type="subunit">
    <text evidence="1">Homodimer. Heterotetramer of two MnmE and two MnmG subunits.</text>
</comment>
<comment type="subcellular location">
    <subcellularLocation>
        <location evidence="1">Cytoplasm</location>
    </subcellularLocation>
</comment>
<comment type="similarity">
    <text evidence="1">Belongs to the TRAFAC class TrmE-Era-EngA-EngB-Septin-like GTPase superfamily. TrmE GTPase family.</text>
</comment>
<protein>
    <recommendedName>
        <fullName evidence="1">tRNA modification GTPase MnmE</fullName>
        <ecNumber evidence="1">3.6.-.-</ecNumber>
    </recommendedName>
</protein>
<name>MNME_RHIE6</name>
<reference key="1">
    <citation type="journal article" date="2010" name="Appl. Environ. Microbiol.">
        <title>Conserved symbiotic plasmid DNA sequences in the multireplicon pangenomic structure of Rhizobium etli.</title>
        <authorList>
            <person name="Gonzalez V."/>
            <person name="Acosta J.L."/>
            <person name="Santamaria R.I."/>
            <person name="Bustos P."/>
            <person name="Fernandez J.L."/>
            <person name="Hernandez Gonzalez I.L."/>
            <person name="Diaz R."/>
            <person name="Flores M."/>
            <person name="Palacios R."/>
            <person name="Mora J."/>
            <person name="Davila G."/>
        </authorList>
    </citation>
    <scope>NUCLEOTIDE SEQUENCE [LARGE SCALE GENOMIC DNA]</scope>
    <source>
        <strain>CIAT 652</strain>
    </source>
</reference>
<sequence length="439" mass="47580">MAMLNDTIYALSSGAPPSGVSVIRVSGTLTRDILFQLVGSVPAARTASYRTIRTRYDQPVDSGLVLFFPGPNSFTGEDAAELQIHGSKAVLAALFRELGDIPGVRMAMEGEFSRRAFENGKLDLVEVEGLADLIGAETEMQRRLAVEQSAGGVSAIYDSWAERLTRARALIEAELDFPDEDDVPGSVSDMVWADMARLRHDIALHLEAASAGEIIRDGFKVVIAGAPNAGKSSLMNALAKREVAIVTDIAGTTRDVLHVDLDIDGYLVKLYDTAGLREAEDRVEIEGVRRARVALRDADLVLLLVDMSNPIIPADLEQALPHVTVGTKKDLIETASDRYDLQISTTTGEGLPELRDLIGRVVKERYGGQSLAIPSRQRHKDSLAKCLAALDAAISQGSANLELRTEQLRLAAEYLGRITGRVDVEQLLDVIFSEFCIGK</sequence>
<feature type="chain" id="PRO_1000122114" description="tRNA modification GTPase MnmE">
    <location>
        <begin position="1"/>
        <end position="439"/>
    </location>
</feature>
<feature type="domain" description="TrmE-type G">
    <location>
        <begin position="218"/>
        <end position="363"/>
    </location>
</feature>
<feature type="binding site" evidence="1">
    <location>
        <position position="24"/>
    </location>
    <ligand>
        <name>(6S)-5-formyl-5,6,7,8-tetrahydrofolate</name>
        <dbReference type="ChEBI" id="CHEBI:57457"/>
    </ligand>
</feature>
<feature type="binding site" evidence="1">
    <location>
        <position position="81"/>
    </location>
    <ligand>
        <name>(6S)-5-formyl-5,6,7,8-tetrahydrofolate</name>
        <dbReference type="ChEBI" id="CHEBI:57457"/>
    </ligand>
</feature>
<feature type="binding site" evidence="1">
    <location>
        <position position="121"/>
    </location>
    <ligand>
        <name>(6S)-5-formyl-5,6,7,8-tetrahydrofolate</name>
        <dbReference type="ChEBI" id="CHEBI:57457"/>
    </ligand>
</feature>
<feature type="binding site" evidence="1">
    <location>
        <begin position="228"/>
        <end position="233"/>
    </location>
    <ligand>
        <name>GTP</name>
        <dbReference type="ChEBI" id="CHEBI:37565"/>
    </ligand>
</feature>
<feature type="binding site" evidence="1">
    <location>
        <position position="228"/>
    </location>
    <ligand>
        <name>K(+)</name>
        <dbReference type="ChEBI" id="CHEBI:29103"/>
    </ligand>
</feature>
<feature type="binding site" evidence="1">
    <location>
        <position position="232"/>
    </location>
    <ligand>
        <name>Mg(2+)</name>
        <dbReference type="ChEBI" id="CHEBI:18420"/>
    </ligand>
</feature>
<feature type="binding site" evidence="1">
    <location>
        <begin position="247"/>
        <end position="253"/>
    </location>
    <ligand>
        <name>GTP</name>
        <dbReference type="ChEBI" id="CHEBI:37565"/>
    </ligand>
</feature>
<feature type="binding site" evidence="1">
    <location>
        <position position="247"/>
    </location>
    <ligand>
        <name>K(+)</name>
        <dbReference type="ChEBI" id="CHEBI:29103"/>
    </ligand>
</feature>
<feature type="binding site" evidence="1">
    <location>
        <position position="249"/>
    </location>
    <ligand>
        <name>K(+)</name>
        <dbReference type="ChEBI" id="CHEBI:29103"/>
    </ligand>
</feature>
<feature type="binding site" evidence="1">
    <location>
        <position position="252"/>
    </location>
    <ligand>
        <name>K(+)</name>
        <dbReference type="ChEBI" id="CHEBI:29103"/>
    </ligand>
</feature>
<feature type="binding site" evidence="1">
    <location>
        <position position="253"/>
    </location>
    <ligand>
        <name>Mg(2+)</name>
        <dbReference type="ChEBI" id="CHEBI:18420"/>
    </ligand>
</feature>
<feature type="binding site" evidence="1">
    <location>
        <begin position="272"/>
        <end position="275"/>
    </location>
    <ligand>
        <name>GTP</name>
        <dbReference type="ChEBI" id="CHEBI:37565"/>
    </ligand>
</feature>
<feature type="binding site" evidence="1">
    <location>
        <position position="439"/>
    </location>
    <ligand>
        <name>(6S)-5-formyl-5,6,7,8-tetrahydrofolate</name>
        <dbReference type="ChEBI" id="CHEBI:57457"/>
    </ligand>
</feature>
<proteinExistence type="inferred from homology"/>
<evidence type="ECO:0000255" key="1">
    <source>
        <dbReference type="HAMAP-Rule" id="MF_00379"/>
    </source>
</evidence>
<gene>
    <name evidence="1" type="primary">mnmE</name>
    <name evidence="1" type="synonym">trmE</name>
    <name type="ordered locus">RHECIAT_CH0004416</name>
</gene>
<dbReference type="EC" id="3.6.-.-" evidence="1"/>
<dbReference type="EMBL" id="CP001074">
    <property type="protein sequence ID" value="ACE93343.1"/>
    <property type="molecule type" value="Genomic_DNA"/>
</dbReference>
<dbReference type="SMR" id="B3PS53"/>
<dbReference type="KEGG" id="rec:RHECIAT_CH0004416"/>
<dbReference type="eggNOG" id="COG0486">
    <property type="taxonomic scope" value="Bacteria"/>
</dbReference>
<dbReference type="HOGENOM" id="CLU_019624_3_1_5"/>
<dbReference type="Proteomes" id="UP000008817">
    <property type="component" value="Chromosome"/>
</dbReference>
<dbReference type="GO" id="GO:0005737">
    <property type="term" value="C:cytoplasm"/>
    <property type="evidence" value="ECO:0007669"/>
    <property type="project" value="UniProtKB-SubCell"/>
</dbReference>
<dbReference type="GO" id="GO:0005525">
    <property type="term" value="F:GTP binding"/>
    <property type="evidence" value="ECO:0007669"/>
    <property type="project" value="UniProtKB-UniRule"/>
</dbReference>
<dbReference type="GO" id="GO:0003924">
    <property type="term" value="F:GTPase activity"/>
    <property type="evidence" value="ECO:0007669"/>
    <property type="project" value="UniProtKB-UniRule"/>
</dbReference>
<dbReference type="GO" id="GO:0046872">
    <property type="term" value="F:metal ion binding"/>
    <property type="evidence" value="ECO:0007669"/>
    <property type="project" value="UniProtKB-KW"/>
</dbReference>
<dbReference type="GO" id="GO:0030488">
    <property type="term" value="P:tRNA methylation"/>
    <property type="evidence" value="ECO:0007669"/>
    <property type="project" value="TreeGrafter"/>
</dbReference>
<dbReference type="GO" id="GO:0002098">
    <property type="term" value="P:tRNA wobble uridine modification"/>
    <property type="evidence" value="ECO:0007669"/>
    <property type="project" value="TreeGrafter"/>
</dbReference>
<dbReference type="CDD" id="cd04164">
    <property type="entry name" value="trmE"/>
    <property type="match status" value="1"/>
</dbReference>
<dbReference type="CDD" id="cd14858">
    <property type="entry name" value="TrmE_N"/>
    <property type="match status" value="1"/>
</dbReference>
<dbReference type="FunFam" id="3.30.1360.120:FF:000007">
    <property type="entry name" value="tRNA modification GTPase GTPBP3, mitochondrial"/>
    <property type="match status" value="1"/>
</dbReference>
<dbReference type="Gene3D" id="3.40.50.300">
    <property type="entry name" value="P-loop containing nucleotide triphosphate hydrolases"/>
    <property type="match status" value="1"/>
</dbReference>
<dbReference type="Gene3D" id="3.30.1360.120">
    <property type="entry name" value="Probable tRNA modification gtpase trme, domain 1"/>
    <property type="match status" value="1"/>
</dbReference>
<dbReference type="Gene3D" id="1.20.120.430">
    <property type="entry name" value="tRNA modification GTPase MnmE domain 2"/>
    <property type="match status" value="1"/>
</dbReference>
<dbReference type="HAMAP" id="MF_00379">
    <property type="entry name" value="GTPase_MnmE"/>
    <property type="match status" value="1"/>
</dbReference>
<dbReference type="InterPro" id="IPR031168">
    <property type="entry name" value="G_TrmE"/>
</dbReference>
<dbReference type="InterPro" id="IPR006073">
    <property type="entry name" value="GTP-bd"/>
</dbReference>
<dbReference type="InterPro" id="IPR018948">
    <property type="entry name" value="GTP-bd_TrmE_N"/>
</dbReference>
<dbReference type="InterPro" id="IPR004520">
    <property type="entry name" value="GTPase_MnmE"/>
</dbReference>
<dbReference type="InterPro" id="IPR027368">
    <property type="entry name" value="MnmE_dom2"/>
</dbReference>
<dbReference type="InterPro" id="IPR025867">
    <property type="entry name" value="MnmE_helical"/>
</dbReference>
<dbReference type="InterPro" id="IPR027417">
    <property type="entry name" value="P-loop_NTPase"/>
</dbReference>
<dbReference type="InterPro" id="IPR005225">
    <property type="entry name" value="Small_GTP-bd"/>
</dbReference>
<dbReference type="InterPro" id="IPR027266">
    <property type="entry name" value="TrmE/GcvT_dom1"/>
</dbReference>
<dbReference type="NCBIfam" id="TIGR00450">
    <property type="entry name" value="mnmE_trmE_thdF"/>
    <property type="match status" value="1"/>
</dbReference>
<dbReference type="NCBIfam" id="NF003661">
    <property type="entry name" value="PRK05291.1-3"/>
    <property type="match status" value="1"/>
</dbReference>
<dbReference type="NCBIfam" id="TIGR00231">
    <property type="entry name" value="small_GTP"/>
    <property type="match status" value="1"/>
</dbReference>
<dbReference type="PANTHER" id="PTHR42714">
    <property type="entry name" value="TRNA MODIFICATION GTPASE GTPBP3"/>
    <property type="match status" value="1"/>
</dbReference>
<dbReference type="PANTHER" id="PTHR42714:SF2">
    <property type="entry name" value="TRNA MODIFICATION GTPASE GTPBP3, MITOCHONDRIAL"/>
    <property type="match status" value="1"/>
</dbReference>
<dbReference type="Pfam" id="PF01926">
    <property type="entry name" value="MMR_HSR1"/>
    <property type="match status" value="1"/>
</dbReference>
<dbReference type="Pfam" id="PF12631">
    <property type="entry name" value="MnmE_helical"/>
    <property type="match status" value="1"/>
</dbReference>
<dbReference type="Pfam" id="PF10396">
    <property type="entry name" value="TrmE_N"/>
    <property type="match status" value="1"/>
</dbReference>
<dbReference type="PRINTS" id="PR00449">
    <property type="entry name" value="RASTRNSFRMNG"/>
</dbReference>
<dbReference type="SUPFAM" id="SSF52540">
    <property type="entry name" value="P-loop containing nucleoside triphosphate hydrolases"/>
    <property type="match status" value="1"/>
</dbReference>
<dbReference type="SUPFAM" id="SSF116878">
    <property type="entry name" value="TrmE connector domain"/>
    <property type="match status" value="1"/>
</dbReference>
<dbReference type="PROSITE" id="PS51709">
    <property type="entry name" value="G_TRME"/>
    <property type="match status" value="1"/>
</dbReference>
<organism>
    <name type="scientific">Rhizobium etli (strain CIAT 652)</name>
    <dbReference type="NCBI Taxonomy" id="491916"/>
    <lineage>
        <taxon>Bacteria</taxon>
        <taxon>Pseudomonadati</taxon>
        <taxon>Pseudomonadota</taxon>
        <taxon>Alphaproteobacteria</taxon>
        <taxon>Hyphomicrobiales</taxon>
        <taxon>Rhizobiaceae</taxon>
        <taxon>Rhizobium/Agrobacterium group</taxon>
        <taxon>Rhizobium</taxon>
    </lineage>
</organism>